<organism>
    <name type="scientific">Candida albicans (strain SC5314 / ATCC MYA-2876)</name>
    <name type="common">Yeast</name>
    <dbReference type="NCBI Taxonomy" id="237561"/>
    <lineage>
        <taxon>Eukaryota</taxon>
        <taxon>Fungi</taxon>
        <taxon>Dikarya</taxon>
        <taxon>Ascomycota</taxon>
        <taxon>Saccharomycotina</taxon>
        <taxon>Pichiomycetes</taxon>
        <taxon>Debaryomycetaceae</taxon>
        <taxon>Candida/Lodderomyces clade</taxon>
        <taxon>Candida</taxon>
    </lineage>
</organism>
<sequence>MPEKELDYIRSTDAAGSTEKDGGIYIDAFDKQDNAPPKKGFAKFIDGFRRADAEELGIDPNLSEAEKIAIMTANSPLTRSLKNRHLQMIAIGGSIGTGLFVGSGSSLHTGGPAGLLIAYILIGTMIYCTVMSLGELAVTFPVSGAFVTYNSRFIDPSWGFAMAWNYAMQWLVVLPLELVAAAMTVKYWDAKTNSAAFVVIFYVLIVAINFFGVRGYGEAEFIFSAVKVLAVLGFIILGIVLCAGGGPQGGYIGGKNWYIEGAPFPNGAKGVITVFVNAAFAFAGTELCGLAAAETENPRKSLPKACKQVFWRITLFYVICLTLVGLLVPWNDERLLGSSSADASASPFVISIRNAGIKGLPSVMNVVIMIAVLSVGNSSVYGSSRTLAALAASNQAPKIFGYIDKQGRPLVGIIAQLLVGLLCFLAASDKQGEVFNWLLALSGLSSIFTWGSINVCLIRFRRALAAQGRDTGELVFTSQVGVIGAIWGAFLNTVVLCLQFWIAVWPLHSSPSAEAFFSAYLTVPVVIVFYVGHKLWTKNWQVYICAKDIDIDTGRRELDLDLVKQEVAEEKAYIASLPFYRRVYNAWC</sequence>
<reference key="1">
    <citation type="journal article" date="2004" name="Proc. Natl. Acad. Sci. U.S.A.">
        <title>The diploid genome sequence of Candida albicans.</title>
        <authorList>
            <person name="Jones T."/>
            <person name="Federspiel N.A."/>
            <person name="Chibana H."/>
            <person name="Dungan J."/>
            <person name="Kalman S."/>
            <person name="Magee B.B."/>
            <person name="Newport G."/>
            <person name="Thorstenson Y.R."/>
            <person name="Agabian N."/>
            <person name="Magee P.T."/>
            <person name="Davis R.W."/>
            <person name="Scherer S."/>
        </authorList>
    </citation>
    <scope>NUCLEOTIDE SEQUENCE [LARGE SCALE GENOMIC DNA]</scope>
    <source>
        <strain>SC5314 / ATCC MYA-2876</strain>
    </source>
</reference>
<reference key="2">
    <citation type="journal article" date="2007" name="Genome Biol.">
        <title>Assembly of the Candida albicans genome into sixteen supercontigs aligned on the eight chromosomes.</title>
        <authorList>
            <person name="van het Hoog M."/>
            <person name="Rast T.J."/>
            <person name="Martchenko M."/>
            <person name="Grindle S."/>
            <person name="Dignard D."/>
            <person name="Hogues H."/>
            <person name="Cuomo C."/>
            <person name="Berriman M."/>
            <person name="Scherer S."/>
            <person name="Magee B.B."/>
            <person name="Whiteway M."/>
            <person name="Chibana H."/>
            <person name="Nantel A."/>
            <person name="Magee P.T."/>
        </authorList>
    </citation>
    <scope>GENOME REANNOTATION</scope>
    <source>
        <strain>SC5314 / ATCC MYA-2876</strain>
    </source>
</reference>
<reference key="3">
    <citation type="journal article" date="2013" name="Genome Biol.">
        <title>Assembly of a phased diploid Candida albicans genome facilitates allele-specific measurements and provides a simple model for repeat and indel structure.</title>
        <authorList>
            <person name="Muzzey D."/>
            <person name="Schwartz K."/>
            <person name="Weissman J.S."/>
            <person name="Sherlock G."/>
        </authorList>
    </citation>
    <scope>NUCLEOTIDE SEQUENCE [LARGE SCALE GENOMIC DNA]</scope>
    <scope>GENOME REANNOTATION</scope>
    <source>
        <strain>SC5314 / ATCC MYA-2876</strain>
    </source>
</reference>
<reference key="4">
    <citation type="journal article" date="2004" name="Eukaryot. Cell">
        <title>Candida albicans Csy1p is a nutrient sensor important for activation of amino acid uptake and hyphal morphogenesis.</title>
        <authorList>
            <person name="Brega E."/>
            <person name="Zufferey R."/>
            <person name="Mamoun C.B."/>
        </authorList>
    </citation>
    <scope>INDUCTION</scope>
</reference>
<reference key="5">
    <citation type="journal article" date="2005" name="Antimicrob. Agents Chemother.">
        <title>Genome-wide expression profiling of the response to azole, polyene, echinocandin, and pyrimidine antifungal agents in Candida albicans.</title>
        <authorList>
            <person name="Liu T.T."/>
            <person name="Lee R.E."/>
            <person name="Barker K.S."/>
            <person name="Lee R.E."/>
            <person name="Wei L."/>
            <person name="Homayouni R."/>
            <person name="Rogers P.D."/>
        </authorList>
    </citation>
    <scope>INDUCTION</scope>
</reference>
<reference key="6">
    <citation type="journal article" date="2005" name="Mol. Biol. Cell">
        <title>Global roles of Ssn6 in Tup1- and Nrg1-dependent gene regulation in the fungal pathogen, Candida albicans.</title>
        <authorList>
            <person name="Garcia-Sanchez S."/>
            <person name="Mavor A.L."/>
            <person name="Russell C.L."/>
            <person name="Argimon S."/>
            <person name="Dennison P."/>
            <person name="Enjalbert B."/>
            <person name="Brown A.J."/>
        </authorList>
    </citation>
    <scope>INDUCTION</scope>
</reference>
<reference key="7">
    <citation type="journal article" date="2011" name="Eukaryot. Cell">
        <title>The Candida albicans GAP gene family encodes permeases involved in general and specific amino acid uptake and sensing.</title>
        <authorList>
            <person name="Kraidlova L."/>
            <person name="Van Zeebroeck G."/>
            <person name="Van Dijck P."/>
            <person name="Sychrova H."/>
        </authorList>
    </citation>
    <scope>FUNCTION</scope>
    <scope>SUBCELLULAR LOCATION</scope>
</reference>
<reference key="8">
    <citation type="journal article" date="2012" name="Cell">
        <title>A recently evolved transcriptional network controls biofilm development in Candida albicans.</title>
        <authorList>
            <person name="Nobile C.J."/>
            <person name="Fox E.P."/>
            <person name="Nett J.E."/>
            <person name="Sorrells T.R."/>
            <person name="Mitrovich Q.M."/>
            <person name="Hernday A.D."/>
            <person name="Tuch B.B."/>
            <person name="Andes D.R."/>
            <person name="Johnson A.D."/>
        </authorList>
    </citation>
    <scope>INDUCTION</scope>
</reference>
<reference key="9">
    <citation type="journal article" date="2016" name="MSphere">
        <title>Characterization of the Candida albicans amino acid permease family: Gap2 is the only general amino acid permease and Gap4 is an S-adenosylmethionine (SAM) transporter required for SAM-induced morphogenesis.</title>
        <authorList>
            <person name="Kraidlova L."/>
            <person name="Schrevens S."/>
            <person name="Tournu H."/>
            <person name="Van Zeebroeck G."/>
            <person name="Sychrova H."/>
            <person name="Van Dijck P."/>
        </authorList>
    </citation>
    <scope>FUNCTION</scope>
    <scope>DISRUPTION PHENOTYPE</scope>
    <scope>INDUCTION</scope>
    <scope>SUBCELLULAR LOCATION</scope>
</reference>
<proteinExistence type="evidence at transcript level"/>
<evidence type="ECO:0000255" key="1"/>
<evidence type="ECO:0000255" key="2">
    <source>
        <dbReference type="PROSITE-ProRule" id="PRU00498"/>
    </source>
</evidence>
<evidence type="ECO:0000269" key="3">
    <source>
    </source>
</evidence>
<evidence type="ECO:0000269" key="4">
    <source>
    </source>
</evidence>
<evidence type="ECO:0000269" key="5">
    <source>
    </source>
</evidence>
<evidence type="ECO:0000269" key="6">
    <source>
    </source>
</evidence>
<evidence type="ECO:0000269" key="7">
    <source>
    </source>
</evidence>
<evidence type="ECO:0000269" key="8">
    <source>
    </source>
</evidence>
<evidence type="ECO:0000305" key="9"/>
<name>GAP2_CANAL</name>
<feature type="chain" id="PRO_0000439807" description="General amino-acid permease GAP2">
    <location>
        <begin position="1"/>
        <end position="588"/>
    </location>
</feature>
<feature type="transmembrane region" description="Helical" evidence="1">
    <location>
        <begin position="88"/>
        <end position="108"/>
    </location>
</feature>
<feature type="transmembrane region" description="Helical" evidence="1">
    <location>
        <begin position="113"/>
        <end position="133"/>
    </location>
</feature>
<feature type="transmembrane region" description="Helical" evidence="1">
    <location>
        <begin position="160"/>
        <end position="180"/>
    </location>
</feature>
<feature type="transmembrane region" description="Helical" evidence="1">
    <location>
        <begin position="193"/>
        <end position="213"/>
    </location>
</feature>
<feature type="transmembrane region" description="Helical" evidence="1">
    <location>
        <begin position="221"/>
        <end position="241"/>
    </location>
</feature>
<feature type="transmembrane region" description="Helical" evidence="1">
    <location>
        <begin position="271"/>
        <end position="291"/>
    </location>
</feature>
<feature type="transmembrane region" description="Helical" evidence="1">
    <location>
        <begin position="309"/>
        <end position="329"/>
    </location>
</feature>
<feature type="transmembrane region" description="Helical" evidence="1">
    <location>
        <begin position="366"/>
        <end position="388"/>
    </location>
</feature>
<feature type="transmembrane region" description="Helical" evidence="1">
    <location>
        <begin position="409"/>
        <end position="429"/>
    </location>
</feature>
<feature type="transmembrane region" description="Helical" evidence="1">
    <location>
        <begin position="438"/>
        <end position="458"/>
    </location>
</feature>
<feature type="transmembrane region" description="Helical" evidence="1">
    <location>
        <begin position="482"/>
        <end position="502"/>
    </location>
</feature>
<feature type="transmembrane region" description="Helical" evidence="1">
    <location>
        <begin position="512"/>
        <end position="532"/>
    </location>
</feature>
<feature type="glycosylation site" description="N-linked (GlcNAc...) asparagine" evidence="2">
    <location>
        <position position="61"/>
    </location>
</feature>
<dbReference type="EMBL" id="CP017625">
    <property type="protein sequence ID" value="AOW28569.1"/>
    <property type="molecule type" value="Genomic_DNA"/>
</dbReference>
<dbReference type="RefSeq" id="XP_714699.1">
    <property type="nucleotide sequence ID" value="XM_709606.1"/>
</dbReference>
<dbReference type="SMR" id="A0A1D8PK89"/>
<dbReference type="FunCoup" id="A0A1D8PK89">
    <property type="interactions" value="217"/>
</dbReference>
<dbReference type="STRING" id="237561.A0A1D8PK89"/>
<dbReference type="GlyCosmos" id="A0A1D8PK89">
    <property type="glycosylation" value="1 site, No reported glycans"/>
</dbReference>
<dbReference type="EnsemblFungi" id="C3_05580C_A-T">
    <property type="protein sequence ID" value="C3_05580C_A-T-p1"/>
    <property type="gene ID" value="C3_05580C_A"/>
</dbReference>
<dbReference type="GeneID" id="3643662"/>
<dbReference type="KEGG" id="cal:CAALFM_C305580CA"/>
<dbReference type="CGD" id="CAL0000177766">
    <property type="gene designation" value="GAP2"/>
</dbReference>
<dbReference type="VEuPathDB" id="FungiDB:C3_05580C_A"/>
<dbReference type="eggNOG" id="KOG1286">
    <property type="taxonomic scope" value="Eukaryota"/>
</dbReference>
<dbReference type="InParanoid" id="A0A1D8PK89"/>
<dbReference type="OMA" id="INADAPF"/>
<dbReference type="OrthoDB" id="3900342at2759"/>
<dbReference type="Proteomes" id="UP000000559">
    <property type="component" value="Chromosome 3"/>
</dbReference>
<dbReference type="GO" id="GO:0016020">
    <property type="term" value="C:membrane"/>
    <property type="evidence" value="ECO:0000318"/>
    <property type="project" value="GO_Central"/>
</dbReference>
<dbReference type="GO" id="GO:0005886">
    <property type="term" value="C:plasma membrane"/>
    <property type="evidence" value="ECO:0007669"/>
    <property type="project" value="UniProtKB-SubCell"/>
</dbReference>
<dbReference type="GO" id="GO:0015171">
    <property type="term" value="F:amino acid transmembrane transporter activity"/>
    <property type="evidence" value="ECO:0000314"/>
    <property type="project" value="CGD"/>
</dbReference>
<dbReference type="GO" id="GO:0003333">
    <property type="term" value="P:amino acid transmembrane transport"/>
    <property type="evidence" value="ECO:0000315"/>
    <property type="project" value="CGD"/>
</dbReference>
<dbReference type="FunFam" id="1.20.1740.10:FF:000017">
    <property type="entry name" value="Amino acid permease"/>
    <property type="match status" value="1"/>
</dbReference>
<dbReference type="Gene3D" id="1.20.1740.10">
    <property type="entry name" value="Amino acid/polyamine transporter I"/>
    <property type="match status" value="1"/>
</dbReference>
<dbReference type="InterPro" id="IPR004841">
    <property type="entry name" value="AA-permease/SLC12A_dom"/>
</dbReference>
<dbReference type="InterPro" id="IPR004840">
    <property type="entry name" value="Amino_acid_permease_CS"/>
</dbReference>
<dbReference type="InterPro" id="IPR004762">
    <property type="entry name" value="Amino_acid_permease_fungi"/>
</dbReference>
<dbReference type="InterPro" id="IPR050524">
    <property type="entry name" value="APC_YAT"/>
</dbReference>
<dbReference type="NCBIfam" id="TIGR00913">
    <property type="entry name" value="2A0310"/>
    <property type="match status" value="1"/>
</dbReference>
<dbReference type="PANTHER" id="PTHR43341">
    <property type="entry name" value="AMINO ACID PERMEASE"/>
    <property type="match status" value="1"/>
</dbReference>
<dbReference type="PANTHER" id="PTHR43341:SF1">
    <property type="entry name" value="GENERAL AMINO-ACID PERMEASE GAP1"/>
    <property type="match status" value="1"/>
</dbReference>
<dbReference type="Pfam" id="PF00324">
    <property type="entry name" value="AA_permease"/>
    <property type="match status" value="1"/>
</dbReference>
<dbReference type="PIRSF" id="PIRSF006060">
    <property type="entry name" value="AA_transporter"/>
    <property type="match status" value="1"/>
</dbReference>
<dbReference type="PROSITE" id="PS00218">
    <property type="entry name" value="AMINO_ACID_PERMEASE_1"/>
    <property type="match status" value="1"/>
</dbReference>
<protein>
    <recommendedName>
        <fullName>General amino-acid permease GAP2</fullName>
    </recommendedName>
</protein>
<comment type="function">
    <text evidence="6 8">Amino-acid permease with broad substrate specificity (PubMed:21764911, PubMed:28028545). GAP2 is the only amino-acid permease with very broad substrate specificity, none of the other GAP permeases is able to transport such a variety of amino acids (PubMed:21764911, PubMed:28028545). GAP2 is also able to transport thialysine, and thus probably also lysine (PubMed:21764911). Functions as a sensor via detection of some amino acids including methionine, leading to a rapid activation of trehalase, a downstream target of PKA (PubMed:21764911).</text>
</comment>
<comment type="subcellular location">
    <subcellularLocation>
        <location evidence="6 8">Cell membrane</location>
        <topology evidence="1">Multi-pass membrane protein</topology>
    </subcellularLocation>
    <text evidence="8">Under nitrogen starvation conditions, the permease is no longer in the membrane but seems to be degraded in the vacuole (PubMed:28028545).</text>
</comment>
<comment type="induction">
    <text evidence="3 4 5 7 8">Expression is under control of the CSY1 amino-acid sensor (PubMed:14871944, PubMed:28028545). Induced during biofilm development (PubMed:22265407). Expression is repressed by nitrogen sources (PubMed:28028545). Expression is repressed by the antifungal agents ketoconazole and flucytosine (PubMed:15917516). Expression is also regulated by NRG1 and TUP1 (PubMed:15814841).</text>
</comment>
<comment type="disruption phenotype">
    <text evidence="8">Leads to a growth defect on medium containing phenylalanine, valine, leucine, or methionine as sole nitrogen source (PubMed:28028545).</text>
</comment>
<comment type="similarity">
    <text evidence="9">Belongs to the amino acid-polyamine-organocation (APC) superfamily. YAT (TC 2.A.3.10) family.</text>
</comment>
<keyword id="KW-0029">Amino-acid transport</keyword>
<keyword id="KW-1003">Cell membrane</keyword>
<keyword id="KW-0325">Glycoprotein</keyword>
<keyword id="KW-0472">Membrane</keyword>
<keyword id="KW-1185">Reference proteome</keyword>
<keyword id="KW-0812">Transmembrane</keyword>
<keyword id="KW-1133">Transmembrane helix</keyword>
<keyword id="KW-0813">Transport</keyword>
<gene>
    <name type="primary">GAP2</name>
    <name type="ordered locus">CAALFM_C305580CA</name>
</gene>
<accession>A0A1D8PK89</accession>